<sequence>MKQKCVLIITDGIGYNKNSKFNAFEAAKKPSYEKLFKEVPNSLLKTSGLAVGLPEGQMGNSEVGHMCIGSGRIIYQNLVRINKAIENKELEKNENLQKLLAKCKRVHIIGLYSDGGVHSMDTHFKAMLEICAKNGNEVFAHAITDGRDVSPKSGLNFIKDLKGFCENLGVHFATLCGRFYAMDRDKRWDRVKEYYECLLGKAYKVPNLLEYLQKSYDENVTDEFIKAAQNENYKGMREEDGIIFINFRNDRMKQLVEVLNSKDFKEFEREKIFENLLTMSVYDDKFKLPVLFEKEKIENTLAQVISKAGLSQLHTAETEKYAHVTFFFNGGKEELLENETRVLIPSPKVKTYDEKPQMSAFEVCDAVKKGIEKGEDFIVVNFANGDMVGHTGDFNAAIKAVEAVDTCLGEIIECAKKHDYAFIITSDHGNCEAMQDEKGNLLTNHTTFDVFVFVQAKGVSKIKDNMGLSNIAASVLKILDLEIPKEMNEALF</sequence>
<accession>Q5HW32</accession>
<keyword id="KW-0324">Glycolysis</keyword>
<keyword id="KW-0413">Isomerase</keyword>
<keyword id="KW-0464">Manganese</keyword>
<keyword id="KW-0479">Metal-binding</keyword>
<comment type="function">
    <text evidence="1">Catalyzes the interconversion of 2-phosphoglycerate and 3-phosphoglycerate.</text>
</comment>
<comment type="catalytic activity">
    <reaction evidence="1">
        <text>(2R)-2-phosphoglycerate = (2R)-3-phosphoglycerate</text>
        <dbReference type="Rhea" id="RHEA:15901"/>
        <dbReference type="ChEBI" id="CHEBI:58272"/>
        <dbReference type="ChEBI" id="CHEBI:58289"/>
        <dbReference type="EC" id="5.4.2.12"/>
    </reaction>
</comment>
<comment type="cofactor">
    <cofactor evidence="1">
        <name>Mn(2+)</name>
        <dbReference type="ChEBI" id="CHEBI:29035"/>
    </cofactor>
    <text evidence="1">Binds 2 manganese ions per subunit.</text>
</comment>
<comment type="pathway">
    <text evidence="1">Carbohydrate degradation; glycolysis; pyruvate from D-glyceraldehyde 3-phosphate: step 3/5.</text>
</comment>
<comment type="subunit">
    <text evidence="1">Monomer.</text>
</comment>
<comment type="similarity">
    <text evidence="1">Belongs to the BPG-independent phosphoglycerate mutase family.</text>
</comment>
<dbReference type="EC" id="5.4.2.12" evidence="1"/>
<dbReference type="EMBL" id="CP000025">
    <property type="protein sequence ID" value="AAW35072.1"/>
    <property type="molecule type" value="Genomic_DNA"/>
</dbReference>
<dbReference type="RefSeq" id="WP_002870135.1">
    <property type="nucleotide sequence ID" value="NC_003912.7"/>
</dbReference>
<dbReference type="SMR" id="Q5HW32"/>
<dbReference type="KEGG" id="cjr:CJE0484"/>
<dbReference type="HOGENOM" id="CLU_026099_2_0_7"/>
<dbReference type="UniPathway" id="UPA00109">
    <property type="reaction ID" value="UER00186"/>
</dbReference>
<dbReference type="GO" id="GO:0005829">
    <property type="term" value="C:cytosol"/>
    <property type="evidence" value="ECO:0007669"/>
    <property type="project" value="TreeGrafter"/>
</dbReference>
<dbReference type="GO" id="GO:0030145">
    <property type="term" value="F:manganese ion binding"/>
    <property type="evidence" value="ECO:0007669"/>
    <property type="project" value="UniProtKB-UniRule"/>
</dbReference>
<dbReference type="GO" id="GO:0004619">
    <property type="term" value="F:phosphoglycerate mutase activity"/>
    <property type="evidence" value="ECO:0007669"/>
    <property type="project" value="UniProtKB-EC"/>
</dbReference>
<dbReference type="GO" id="GO:0006007">
    <property type="term" value="P:glucose catabolic process"/>
    <property type="evidence" value="ECO:0007669"/>
    <property type="project" value="InterPro"/>
</dbReference>
<dbReference type="GO" id="GO:0006096">
    <property type="term" value="P:glycolytic process"/>
    <property type="evidence" value="ECO:0007669"/>
    <property type="project" value="UniProtKB-UniRule"/>
</dbReference>
<dbReference type="CDD" id="cd16010">
    <property type="entry name" value="iPGM"/>
    <property type="match status" value="1"/>
</dbReference>
<dbReference type="FunFam" id="3.40.1450.10:FF:000002">
    <property type="entry name" value="2,3-bisphosphoglycerate-independent phosphoglycerate mutase"/>
    <property type="match status" value="1"/>
</dbReference>
<dbReference type="Gene3D" id="3.40.720.10">
    <property type="entry name" value="Alkaline Phosphatase, subunit A"/>
    <property type="match status" value="1"/>
</dbReference>
<dbReference type="Gene3D" id="3.40.1450.10">
    <property type="entry name" value="BPG-independent phosphoglycerate mutase, domain B"/>
    <property type="match status" value="1"/>
</dbReference>
<dbReference type="HAMAP" id="MF_01038">
    <property type="entry name" value="GpmI"/>
    <property type="match status" value="1"/>
</dbReference>
<dbReference type="InterPro" id="IPR017850">
    <property type="entry name" value="Alkaline_phosphatase_core_sf"/>
</dbReference>
<dbReference type="InterPro" id="IPR011258">
    <property type="entry name" value="BPG-indep_PGM_N"/>
</dbReference>
<dbReference type="InterPro" id="IPR006124">
    <property type="entry name" value="Metalloenzyme"/>
</dbReference>
<dbReference type="InterPro" id="IPR036646">
    <property type="entry name" value="PGAM_B_sf"/>
</dbReference>
<dbReference type="InterPro" id="IPR005995">
    <property type="entry name" value="Pgm_bpd_ind"/>
</dbReference>
<dbReference type="NCBIfam" id="TIGR01307">
    <property type="entry name" value="pgm_bpd_ind"/>
    <property type="match status" value="1"/>
</dbReference>
<dbReference type="PANTHER" id="PTHR31637">
    <property type="entry name" value="2,3-BISPHOSPHOGLYCERATE-INDEPENDENT PHOSPHOGLYCERATE MUTASE"/>
    <property type="match status" value="1"/>
</dbReference>
<dbReference type="PANTHER" id="PTHR31637:SF0">
    <property type="entry name" value="2,3-BISPHOSPHOGLYCERATE-INDEPENDENT PHOSPHOGLYCERATE MUTASE"/>
    <property type="match status" value="1"/>
</dbReference>
<dbReference type="Pfam" id="PF06415">
    <property type="entry name" value="iPGM_N"/>
    <property type="match status" value="1"/>
</dbReference>
<dbReference type="Pfam" id="PF01676">
    <property type="entry name" value="Metalloenzyme"/>
    <property type="match status" value="1"/>
</dbReference>
<dbReference type="PIRSF" id="PIRSF001492">
    <property type="entry name" value="IPGAM"/>
    <property type="match status" value="1"/>
</dbReference>
<dbReference type="SUPFAM" id="SSF64158">
    <property type="entry name" value="2,3-Bisphosphoglycerate-independent phosphoglycerate mutase, substrate-binding domain"/>
    <property type="match status" value="1"/>
</dbReference>
<dbReference type="SUPFAM" id="SSF53649">
    <property type="entry name" value="Alkaline phosphatase-like"/>
    <property type="match status" value="1"/>
</dbReference>
<reference key="1">
    <citation type="journal article" date="2005" name="PLoS Biol.">
        <title>Major structural differences and novel potential virulence mechanisms from the genomes of multiple Campylobacter species.</title>
        <authorList>
            <person name="Fouts D.E."/>
            <person name="Mongodin E.F."/>
            <person name="Mandrell R.E."/>
            <person name="Miller W.G."/>
            <person name="Rasko D.A."/>
            <person name="Ravel J."/>
            <person name="Brinkac L.M."/>
            <person name="DeBoy R.T."/>
            <person name="Parker C.T."/>
            <person name="Daugherty S.C."/>
            <person name="Dodson R.J."/>
            <person name="Durkin A.S."/>
            <person name="Madupu R."/>
            <person name="Sullivan S.A."/>
            <person name="Shetty J.U."/>
            <person name="Ayodeji M.A."/>
            <person name="Shvartsbeyn A."/>
            <person name="Schatz M.C."/>
            <person name="Badger J.H."/>
            <person name="Fraser C.M."/>
            <person name="Nelson K.E."/>
        </authorList>
    </citation>
    <scope>NUCLEOTIDE SEQUENCE [LARGE SCALE GENOMIC DNA]</scope>
    <source>
        <strain>RM1221</strain>
    </source>
</reference>
<name>GPMI_CAMJR</name>
<proteinExistence type="inferred from homology"/>
<gene>
    <name evidence="1" type="primary">gpmI</name>
    <name type="synonym">pgm</name>
    <name type="ordered locus">CJE0484</name>
</gene>
<feature type="chain" id="PRO_0000212134" description="2,3-bisphosphoglycerate-independent phosphoglycerate mutase">
    <location>
        <begin position="1"/>
        <end position="492"/>
    </location>
</feature>
<feature type="active site" description="Phosphoserine intermediate" evidence="1">
    <location>
        <position position="61"/>
    </location>
</feature>
<feature type="binding site" evidence="1">
    <location>
        <position position="11"/>
    </location>
    <ligand>
        <name>Mn(2+)</name>
        <dbReference type="ChEBI" id="CHEBI:29035"/>
        <label>2</label>
    </ligand>
</feature>
<feature type="binding site" evidence="1">
    <location>
        <position position="61"/>
    </location>
    <ligand>
        <name>Mn(2+)</name>
        <dbReference type="ChEBI" id="CHEBI:29035"/>
        <label>2</label>
    </ligand>
</feature>
<feature type="binding site" evidence="1">
    <location>
        <position position="118"/>
    </location>
    <ligand>
        <name>substrate</name>
    </ligand>
</feature>
<feature type="binding site" evidence="1">
    <location>
        <begin position="147"/>
        <end position="148"/>
    </location>
    <ligand>
        <name>substrate</name>
    </ligand>
</feature>
<feature type="binding site" evidence="1">
    <location>
        <position position="178"/>
    </location>
    <ligand>
        <name>substrate</name>
    </ligand>
</feature>
<feature type="binding site" evidence="1">
    <location>
        <position position="184"/>
    </location>
    <ligand>
        <name>substrate</name>
    </ligand>
</feature>
<feature type="binding site" evidence="1">
    <location>
        <begin position="248"/>
        <end position="251"/>
    </location>
    <ligand>
        <name>substrate</name>
    </ligand>
</feature>
<feature type="binding site" evidence="1">
    <location>
        <position position="320"/>
    </location>
    <ligand>
        <name>substrate</name>
    </ligand>
</feature>
<feature type="binding site" evidence="1">
    <location>
        <position position="386"/>
    </location>
    <ligand>
        <name>Mn(2+)</name>
        <dbReference type="ChEBI" id="CHEBI:29035"/>
        <label>1</label>
    </ligand>
</feature>
<feature type="binding site" evidence="1">
    <location>
        <position position="390"/>
    </location>
    <ligand>
        <name>Mn(2+)</name>
        <dbReference type="ChEBI" id="CHEBI:29035"/>
        <label>1</label>
    </ligand>
</feature>
<feature type="binding site" evidence="1">
    <location>
        <position position="427"/>
    </location>
    <ligand>
        <name>Mn(2+)</name>
        <dbReference type="ChEBI" id="CHEBI:29035"/>
        <label>2</label>
    </ligand>
</feature>
<feature type="binding site" evidence="1">
    <location>
        <position position="428"/>
    </location>
    <ligand>
        <name>Mn(2+)</name>
        <dbReference type="ChEBI" id="CHEBI:29035"/>
        <label>2</label>
    </ligand>
</feature>
<feature type="binding site" evidence="1">
    <location>
        <position position="445"/>
    </location>
    <ligand>
        <name>Mn(2+)</name>
        <dbReference type="ChEBI" id="CHEBI:29035"/>
        <label>1</label>
    </ligand>
</feature>
<protein>
    <recommendedName>
        <fullName evidence="1">2,3-bisphosphoglycerate-independent phosphoglycerate mutase</fullName>
        <shortName evidence="1">BPG-independent PGAM</shortName>
        <shortName evidence="1">Phosphoglyceromutase</shortName>
        <shortName evidence="1">iPGM</shortName>
        <ecNumber evidence="1">5.4.2.12</ecNumber>
    </recommendedName>
</protein>
<organism>
    <name type="scientific">Campylobacter jejuni (strain RM1221)</name>
    <dbReference type="NCBI Taxonomy" id="195099"/>
    <lineage>
        <taxon>Bacteria</taxon>
        <taxon>Pseudomonadati</taxon>
        <taxon>Campylobacterota</taxon>
        <taxon>Epsilonproteobacteria</taxon>
        <taxon>Campylobacterales</taxon>
        <taxon>Campylobacteraceae</taxon>
        <taxon>Campylobacter</taxon>
    </lineage>
</organism>
<evidence type="ECO:0000255" key="1">
    <source>
        <dbReference type="HAMAP-Rule" id="MF_01038"/>
    </source>
</evidence>